<keyword id="KW-0175">Coiled coil</keyword>
<keyword id="KW-0325">Glycoprotein</keyword>
<keyword id="KW-1043">Host membrane</keyword>
<keyword id="KW-0472">Membrane</keyword>
<keyword id="KW-1185">Reference proteome</keyword>
<keyword id="KW-0732">Signal</keyword>
<keyword id="KW-0812">Transmembrane</keyword>
<keyword id="KW-1133">Transmembrane helix</keyword>
<protein>
    <recommendedName>
        <fullName>Probable major glycoprotein</fullName>
    </recommendedName>
</protein>
<feature type="signal peptide" evidence="1">
    <location>
        <begin position="1"/>
        <end position="16"/>
    </location>
</feature>
<feature type="chain" id="PRO_0000222128" description="Probable major glycoprotein">
    <location>
        <begin position="17"/>
        <end position="1355"/>
    </location>
</feature>
<feature type="transmembrane region" description="Helical" evidence="1">
    <location>
        <begin position="1308"/>
        <end position="1328"/>
    </location>
</feature>
<feature type="coiled-coil region" evidence="1">
    <location>
        <begin position="1245"/>
        <end position="1299"/>
    </location>
</feature>
<feature type="glycosylation site" description="N-linked (GlcNAc...) asparagine; by host" evidence="1">
    <location>
        <position position="81"/>
    </location>
</feature>
<feature type="glycosylation site" description="N-linked (GlcNAc...) asparagine; by host" evidence="1">
    <location>
        <position position="112"/>
    </location>
</feature>
<feature type="glycosylation site" description="N-linked (GlcNAc...) asparagine; by host" evidence="1">
    <location>
        <position position="129"/>
    </location>
</feature>
<feature type="glycosylation site" description="N-linked (GlcNAc...) asparagine; by host" evidence="1">
    <location>
        <position position="169"/>
    </location>
</feature>
<feature type="glycosylation site" description="N-linked (GlcNAc...) asparagine; by host" evidence="1">
    <location>
        <position position="173"/>
    </location>
</feature>
<feature type="glycosylation site" description="N-linked (GlcNAc...) asparagine; by host" evidence="1">
    <location>
        <position position="192"/>
    </location>
</feature>
<feature type="glycosylation site" description="N-linked (GlcNAc...) asparagine; by host" evidence="1">
    <location>
        <position position="542"/>
    </location>
</feature>
<feature type="glycosylation site" description="N-linked (GlcNAc...) asparagine; by host" evidence="1">
    <location>
        <position position="655"/>
    </location>
</feature>
<feature type="glycosylation site" description="N-linked (GlcNAc...) asparagine; by host" evidence="1">
    <location>
        <position position="682"/>
    </location>
</feature>
<feature type="glycosylation site" description="N-linked (GlcNAc...) asparagine; by host" evidence="1">
    <location>
        <position position="744"/>
    </location>
</feature>
<feature type="glycosylation site" description="N-linked (GlcNAc...) asparagine; by host" evidence="1">
    <location>
        <position position="780"/>
    </location>
</feature>
<feature type="glycosylation site" description="N-linked (GlcNAc...) asparagine; by host" evidence="1">
    <location>
        <position position="811"/>
    </location>
</feature>
<feature type="glycosylation site" description="N-linked (GlcNAc...) asparagine; by host" evidence="1">
    <location>
        <position position="815"/>
    </location>
</feature>
<feature type="glycosylation site" description="N-linked (GlcNAc...) asparagine; by host" evidence="1">
    <location>
        <position position="860"/>
    </location>
</feature>
<feature type="glycosylation site" description="N-linked (GlcNAc...) asparagine; by host" evidence="1">
    <location>
        <position position="865"/>
    </location>
</feature>
<feature type="glycosylation site" description="N-linked (GlcNAc...) asparagine; by host" evidence="1">
    <location>
        <position position="882"/>
    </location>
</feature>
<feature type="glycosylation site" description="N-linked (GlcNAc...) asparagine; by host" evidence="1">
    <location>
        <position position="895"/>
    </location>
</feature>
<feature type="glycosylation site" description="N-linked (GlcNAc...) asparagine; by host" evidence="1">
    <location>
        <position position="1213"/>
    </location>
</feature>
<feature type="glycosylation site" description="N-linked (GlcNAc...) asparagine; by host" evidence="1">
    <location>
        <position position="1225"/>
    </location>
</feature>
<feature type="glycosylation site" description="N-linked (GlcNAc...) asparagine; by host" evidence="1">
    <location>
        <position position="1267"/>
    </location>
</feature>
<feature type="glycosylation site" description="N-linked (GlcNAc...) asparagine; by host" evidence="1">
    <location>
        <position position="1274"/>
    </location>
</feature>
<proteinExistence type="inferred from homology"/>
<name>VG46_ICHVA</name>
<sequence length="1355" mass="149120">MKKTMLAIILIPLVYAVAGETVADDEVFFLSAPQLDGTLIDSWGTDAVITGSTLMNRLWKTFTVSATHTLREYGRVAKSVNSTAATKCTHLCVPGTVLKLSVQATRSNANNNASWRFARPVITNMHELNETCIPMEYDCEEVISEKTSLNTLSITIYGSNDLKKALGENSTCNKTWTQGCAIATALTALYENKSVDARKLNILRGTSYTCLLGYLGIGELEPNSPCWTQLGPMCYGPLAEQVCVTAGRNPFGVVPRADRPVSTGVDCRVGSRADLQFSGLTKGLFAERGCDRVFVRCDLIDPYDPPATAAEFELHVECRSSFRVSGFPGEGEDMGLELAFNNFGLEGLIRTKQDRLTIITGIFDIRNNKYNALVINWIPTPELLDTFHMFMAELDTFRKIHRPTVRLGVVITGASPFVEQYNFKLLSGVVDMVYIHPQIQPMTSTPTLTCPMPIRSDSLECGEPHRQCPGFDGYRHLTYATRFLLGHISPEKLTLGLDVSCQLWGRRVRQYDTNWYFQDNLFSEVQGGWVSRGYITDVIQPNMTQAIQLNGCHGVFGPELDILLPSADATPYVGLLWSQPSDLEDAVDFSMALGITRFSIEGALGDVYMDSSENLKTVSTVHEAVTVRMRAHAMMEEMLGEGGLAAFDESMIWANVTRSTGTATTGARKRRALTTQGPDGVNRTIPFSASVQSGTSIVRIGTGPKMVCPGIIASVRGLLFSRTSYQGFYRLTFFQNLYVTQLQNLTGCTAVKPEDLPVITQATKVPSVFAIDINTFGVVNGSEYYVVGLEGTDLVQYSPQVKQSCAFINTNETFNQTFITIDERFFFTGPRPVADGFVIPAGINFFGSDNIMTVDYIDFNVTCMNYSNPSVQSCIATVCAANVTECTPRATLLCNQTAAILLDFQRSNELLKNSLVDLDLEHEKVKMFAPASGGSVPTSDKFGLSVAAITMSSAALVASTAALAVATLAASKIDGLQAQLDKTADVITELGDSIALISAKLDRNIRAVNGRVDDLQNQINLQMLAMDTNFKRLATGLKELGTTTNERLGEVMAYQQWYQQIMSLTNQVTQGAIQIGYKVGMIRTCVKSLLAGTMAGCPTDASSFRDHPGLTFRKTVRALLYRDQKLFIVNEVPQTLTARSVQVFIPSPTITEKKVCWPDYKLMHVDGKVVAPLECTGKYCSEPIEATDYQECLTNPSTCRYVCGDCYRGICYNRTTEDISIKFENVTHALSVSDLTSPLFNSIPQIVSMEMEIQDLKLELIQLQKINTSVHMENITGDIDAMKATIEEYRAEMAKLRVTGFGEWLKYFIYAILGVIAIGALIAIIFMAVKCYQARALLSMTAYQPVPTRPMGMMY</sequence>
<gene>
    <name type="primary">ORF46</name>
</gene>
<accession>Q00104</accession>
<reference key="1">
    <citation type="journal article" date="1992" name="Virology">
        <title>Channel catfish virus: a new type of herpesvirus.</title>
        <authorList>
            <person name="Davison A.J."/>
        </authorList>
    </citation>
    <scope>NUCLEOTIDE SEQUENCE [LARGE SCALE GENOMIC DNA]</scope>
</reference>
<evidence type="ECO:0000255" key="1"/>
<evidence type="ECO:0000305" key="2"/>
<comment type="subcellular location">
    <subcellularLocation>
        <location evidence="2">Host membrane</location>
        <topology evidence="2">Single-pass membrane protein</topology>
    </subcellularLocation>
</comment>
<dbReference type="EMBL" id="M75136">
    <property type="protein sequence ID" value="AAA88149.1"/>
    <property type="molecule type" value="Genomic_DNA"/>
</dbReference>
<dbReference type="PIR" id="B36791">
    <property type="entry name" value="VGBEI1"/>
</dbReference>
<dbReference type="RefSeq" id="NP_041137.1">
    <property type="nucleotide sequence ID" value="NC_001493.2"/>
</dbReference>
<dbReference type="GlyCosmos" id="Q00104">
    <property type="glycosylation" value="21 sites, No reported glycans"/>
</dbReference>
<dbReference type="GeneID" id="1488406"/>
<dbReference type="KEGG" id="vg:1488406"/>
<dbReference type="Proteomes" id="UP000007643">
    <property type="component" value="Segment"/>
</dbReference>
<dbReference type="GO" id="GO:0033644">
    <property type="term" value="C:host cell membrane"/>
    <property type="evidence" value="ECO:0007669"/>
    <property type="project" value="UniProtKB-SubCell"/>
</dbReference>
<dbReference type="GO" id="GO:0016020">
    <property type="term" value="C:membrane"/>
    <property type="evidence" value="ECO:0007669"/>
    <property type="project" value="UniProtKB-KW"/>
</dbReference>
<dbReference type="InterPro" id="IPR031412">
    <property type="entry name" value="S_torovirinae"/>
</dbReference>
<dbReference type="Pfam" id="PF17072">
    <property type="entry name" value="Spike_torovirin"/>
    <property type="match status" value="1"/>
</dbReference>
<organismHost>
    <name type="scientific">Ictaluridae</name>
    <name type="common">bullhead catfishes</name>
    <dbReference type="NCBI Taxonomy" id="7996"/>
</organismHost>
<organism>
    <name type="scientific">Ictalurid herpesvirus 1 (strain Auburn)</name>
    <name type="common">IcHV-1</name>
    <name type="synonym">Channel catfish herpesvirus</name>
    <dbReference type="NCBI Taxonomy" id="766178"/>
    <lineage>
        <taxon>Viruses</taxon>
        <taxon>Duplodnaviria</taxon>
        <taxon>Heunggongvirae</taxon>
        <taxon>Peploviricota</taxon>
        <taxon>Herviviricetes</taxon>
        <taxon>Herpesvirales</taxon>
        <taxon>Alloherpesviridae</taxon>
        <taxon>Ictavirus</taxon>
        <taxon>Ictavirus ictaluridallo1</taxon>
        <taxon>Ictalurid herpesvirus 1</taxon>
    </lineage>
</organism>